<name>MDTA_ECOLU</name>
<feature type="signal peptide" evidence="1">
    <location>
        <begin position="1"/>
        <end position="21"/>
    </location>
</feature>
<feature type="chain" id="PRO_1000145639" description="Multidrug resistance protein MdtA">
    <location>
        <begin position="22"/>
        <end position="415"/>
    </location>
</feature>
<feature type="region of interest" description="Disordered" evidence="2">
    <location>
        <begin position="32"/>
        <end position="59"/>
    </location>
</feature>
<feature type="region of interest" description="Disordered" evidence="2">
    <location>
        <begin position="392"/>
        <end position="415"/>
    </location>
</feature>
<feature type="compositionally biased region" description="Basic and acidic residues" evidence="2">
    <location>
        <begin position="399"/>
        <end position="415"/>
    </location>
</feature>
<protein>
    <recommendedName>
        <fullName evidence="1">Multidrug resistance protein MdtA</fullName>
    </recommendedName>
    <alternativeName>
        <fullName evidence="1">Multidrug transporter MdtA</fullName>
    </alternativeName>
</protein>
<reference key="1">
    <citation type="journal article" date="2009" name="PLoS Genet.">
        <title>Organised genome dynamics in the Escherichia coli species results in highly diverse adaptive paths.</title>
        <authorList>
            <person name="Touchon M."/>
            <person name="Hoede C."/>
            <person name="Tenaillon O."/>
            <person name="Barbe V."/>
            <person name="Baeriswyl S."/>
            <person name="Bidet P."/>
            <person name="Bingen E."/>
            <person name="Bonacorsi S."/>
            <person name="Bouchier C."/>
            <person name="Bouvet O."/>
            <person name="Calteau A."/>
            <person name="Chiapello H."/>
            <person name="Clermont O."/>
            <person name="Cruveiller S."/>
            <person name="Danchin A."/>
            <person name="Diard M."/>
            <person name="Dossat C."/>
            <person name="Karoui M.E."/>
            <person name="Frapy E."/>
            <person name="Garry L."/>
            <person name="Ghigo J.M."/>
            <person name="Gilles A.M."/>
            <person name="Johnson J."/>
            <person name="Le Bouguenec C."/>
            <person name="Lescat M."/>
            <person name="Mangenot S."/>
            <person name="Martinez-Jehanne V."/>
            <person name="Matic I."/>
            <person name="Nassif X."/>
            <person name="Oztas S."/>
            <person name="Petit M.A."/>
            <person name="Pichon C."/>
            <person name="Rouy Z."/>
            <person name="Ruf C.S."/>
            <person name="Schneider D."/>
            <person name="Tourret J."/>
            <person name="Vacherie B."/>
            <person name="Vallenet D."/>
            <person name="Medigue C."/>
            <person name="Rocha E.P.C."/>
            <person name="Denamur E."/>
        </authorList>
    </citation>
    <scope>NUCLEOTIDE SEQUENCE [LARGE SCALE GENOMIC DNA]</scope>
    <source>
        <strain>UMN026 / ExPEC</strain>
    </source>
</reference>
<keyword id="KW-0997">Cell inner membrane</keyword>
<keyword id="KW-1003">Cell membrane</keyword>
<keyword id="KW-0472">Membrane</keyword>
<keyword id="KW-0732">Signal</keyword>
<keyword id="KW-0813">Transport</keyword>
<comment type="function">
    <text evidence="1">The MdtABC tripartite complex confers resistance against novobiocin and deoxycholate.</text>
</comment>
<comment type="subunit">
    <text evidence="1">Part of a tripartite efflux system composed of MdtA, MdtB and MdtC.</text>
</comment>
<comment type="subcellular location">
    <subcellularLocation>
        <location evidence="1">Cell inner membrane</location>
        <topology evidence="1">Peripheral membrane protein</topology>
    </subcellularLocation>
</comment>
<comment type="induction">
    <text evidence="1">The mdtABC operon is transcriptionally activated by BaeR.</text>
</comment>
<comment type="similarity">
    <text evidence="1">Belongs to the membrane fusion protein (MFP) (TC 8.A.1) family.</text>
</comment>
<dbReference type="EMBL" id="CU928163">
    <property type="protein sequence ID" value="CAR13600.1"/>
    <property type="molecule type" value="Genomic_DNA"/>
</dbReference>
<dbReference type="RefSeq" id="WP_000678993.1">
    <property type="nucleotide sequence ID" value="NC_011751.1"/>
</dbReference>
<dbReference type="RefSeq" id="YP_002413128.1">
    <property type="nucleotide sequence ID" value="NC_011751.1"/>
</dbReference>
<dbReference type="SMR" id="B7NCB0"/>
<dbReference type="STRING" id="585056.ECUMN_2412"/>
<dbReference type="KEGG" id="eum:ECUMN_2412"/>
<dbReference type="PATRIC" id="fig|585056.7.peg.2593"/>
<dbReference type="HOGENOM" id="CLU_018816_2_0_6"/>
<dbReference type="Proteomes" id="UP000007097">
    <property type="component" value="Chromosome"/>
</dbReference>
<dbReference type="GO" id="GO:1990281">
    <property type="term" value="C:efflux pump complex"/>
    <property type="evidence" value="ECO:0007669"/>
    <property type="project" value="TreeGrafter"/>
</dbReference>
<dbReference type="GO" id="GO:0005886">
    <property type="term" value="C:plasma membrane"/>
    <property type="evidence" value="ECO:0007669"/>
    <property type="project" value="UniProtKB-SubCell"/>
</dbReference>
<dbReference type="GO" id="GO:0015562">
    <property type="term" value="F:efflux transmembrane transporter activity"/>
    <property type="evidence" value="ECO:0007669"/>
    <property type="project" value="TreeGrafter"/>
</dbReference>
<dbReference type="FunFam" id="2.40.420.20:FF:000001">
    <property type="entry name" value="Efflux RND transporter periplasmic adaptor subunit"/>
    <property type="match status" value="1"/>
</dbReference>
<dbReference type="FunFam" id="1.10.287.470:FF:000005">
    <property type="entry name" value="Multidrug resistance protein MdtA"/>
    <property type="match status" value="1"/>
</dbReference>
<dbReference type="FunFam" id="2.40.30.170:FF:000006">
    <property type="entry name" value="Multidrug resistance protein MdtA"/>
    <property type="match status" value="1"/>
</dbReference>
<dbReference type="Gene3D" id="2.40.30.170">
    <property type="match status" value="1"/>
</dbReference>
<dbReference type="Gene3D" id="2.40.420.20">
    <property type="match status" value="1"/>
</dbReference>
<dbReference type="Gene3D" id="2.40.50.100">
    <property type="match status" value="1"/>
</dbReference>
<dbReference type="Gene3D" id="1.10.287.470">
    <property type="entry name" value="Helix hairpin bin"/>
    <property type="match status" value="1"/>
</dbReference>
<dbReference type="HAMAP" id="MF_01422">
    <property type="entry name" value="MdtA"/>
    <property type="match status" value="1"/>
</dbReference>
<dbReference type="InterPro" id="IPR032317">
    <property type="entry name" value="CusB_D23"/>
</dbReference>
<dbReference type="InterPro" id="IPR022824">
    <property type="entry name" value="Multidrug-R_MdtA"/>
</dbReference>
<dbReference type="InterPro" id="IPR006143">
    <property type="entry name" value="RND_pump_MFP"/>
</dbReference>
<dbReference type="NCBIfam" id="NF008589">
    <property type="entry name" value="PRK11556.1"/>
    <property type="match status" value="1"/>
</dbReference>
<dbReference type="NCBIfam" id="TIGR01730">
    <property type="entry name" value="RND_mfp"/>
    <property type="match status" value="1"/>
</dbReference>
<dbReference type="PANTHER" id="PTHR30469">
    <property type="entry name" value="MULTIDRUG RESISTANCE PROTEIN MDTA"/>
    <property type="match status" value="1"/>
</dbReference>
<dbReference type="PANTHER" id="PTHR30469:SF12">
    <property type="entry name" value="MULTIDRUG RESISTANCE PROTEIN MDTA"/>
    <property type="match status" value="1"/>
</dbReference>
<dbReference type="Pfam" id="PF16576">
    <property type="entry name" value="HlyD_D23"/>
    <property type="match status" value="1"/>
</dbReference>
<dbReference type="SUPFAM" id="SSF111369">
    <property type="entry name" value="HlyD-like secretion proteins"/>
    <property type="match status" value="1"/>
</dbReference>
<sequence>MKGSYKSRWVIVIVVVIAAIAAFWFWQGRNDSRSAAPGATKQAQQSPAGGRRGMRSGPLAPVQAATAVEQAVPRYLTGLGTITAANTVTVRSRVDGQLIALHFQEGQQVKAGDLLAEIDPSQFKVALAQAQGQLAKDKATLANARRDLARYQQLVKTNLVSRQELDAQQALVSETEGTIKADEASVASAQLQLDWSRITAPVDGRVGLKQVDVGNQISSGDTTGIVVITQTHPIDLVFTLPESDIATVVQAQKAGKPLVVEAWDRTNSKKLSEGTLLSLDNQIDATTGTIKVKARFNNQDDALFPNQFVNARMLVDTEQNAVVIPTAALQMGNEGHFVWVLNSENKVSKHLVTPGIQDSQKVVIRAGISAGDRVVTDGIDRLTEGAKVEVVEAQSATTSEEKATSREYAKKGARS</sequence>
<accession>B7NCB0</accession>
<organism>
    <name type="scientific">Escherichia coli O17:K52:H18 (strain UMN026 / ExPEC)</name>
    <dbReference type="NCBI Taxonomy" id="585056"/>
    <lineage>
        <taxon>Bacteria</taxon>
        <taxon>Pseudomonadati</taxon>
        <taxon>Pseudomonadota</taxon>
        <taxon>Gammaproteobacteria</taxon>
        <taxon>Enterobacterales</taxon>
        <taxon>Enterobacteriaceae</taxon>
        <taxon>Escherichia</taxon>
    </lineage>
</organism>
<evidence type="ECO:0000255" key="1">
    <source>
        <dbReference type="HAMAP-Rule" id="MF_01422"/>
    </source>
</evidence>
<evidence type="ECO:0000256" key="2">
    <source>
        <dbReference type="SAM" id="MobiDB-lite"/>
    </source>
</evidence>
<gene>
    <name evidence="1" type="primary">mdtA</name>
    <name type="ordered locus">ECUMN_2412</name>
</gene>
<proteinExistence type="inferred from homology"/>